<protein>
    <recommendedName>
        <fullName evidence="1">Porphobilinogen deaminase</fullName>
        <shortName evidence="1">PBG</shortName>
        <ecNumber evidence="1">2.5.1.61</ecNumber>
    </recommendedName>
    <alternativeName>
        <fullName evidence="1">Hydroxymethylbilane synthase</fullName>
        <shortName evidence="1">HMBS</shortName>
    </alternativeName>
    <alternativeName>
        <fullName evidence="1">Pre-uroporphyrinogen synthase</fullName>
    </alternativeName>
</protein>
<sequence length="291" mass="32450">MELIIATRKSKLAQVQTEKVMELLKKKENVDSKKLLVMTEGDRRLDVSLNKIGGKGLFVKEIELALLNKEAHGAVHSMKDVPFELPSEFELVAMPEREDIRDAFVSLNGSTLSNLRKGARIGTSSIRRAEQLKLFRDDLEIVPIRGNVQTRIKKITEENLDGIILAAAGLKRLGMEDVISDYFDPKVFLPAIGQGALGIECLKDGEFNDYFKALDSKEVRTTVEAERSFMKVLNGGCHSLIGAYSEVKDNDLYMIGTFTVNNRIVKKDILGNKEDNILLGKKLAEKILGEV</sequence>
<evidence type="ECO:0000255" key="1">
    <source>
        <dbReference type="HAMAP-Rule" id="MF_00260"/>
    </source>
</evidence>
<feature type="chain" id="PRO_0000304229" description="Porphobilinogen deaminase">
    <location>
        <begin position="1"/>
        <end position="291"/>
    </location>
</feature>
<feature type="modified residue" description="S-(dipyrrolylmethanemethyl)cysteine" evidence="1">
    <location>
        <position position="237"/>
    </location>
</feature>
<keyword id="KW-0627">Porphyrin biosynthesis</keyword>
<keyword id="KW-0808">Transferase</keyword>
<organism>
    <name type="scientific">Clostridium perfringens (strain SM101 / Type A)</name>
    <dbReference type="NCBI Taxonomy" id="289380"/>
    <lineage>
        <taxon>Bacteria</taxon>
        <taxon>Bacillati</taxon>
        <taxon>Bacillota</taxon>
        <taxon>Clostridia</taxon>
        <taxon>Eubacteriales</taxon>
        <taxon>Clostridiaceae</taxon>
        <taxon>Clostridium</taxon>
    </lineage>
</organism>
<reference key="1">
    <citation type="journal article" date="2006" name="Genome Res.">
        <title>Skewed genomic variability in strains of the toxigenic bacterial pathogen, Clostridium perfringens.</title>
        <authorList>
            <person name="Myers G.S.A."/>
            <person name="Rasko D.A."/>
            <person name="Cheung J.K."/>
            <person name="Ravel J."/>
            <person name="Seshadri R."/>
            <person name="DeBoy R.T."/>
            <person name="Ren Q."/>
            <person name="Varga J."/>
            <person name="Awad M.M."/>
            <person name="Brinkac L.M."/>
            <person name="Daugherty S.C."/>
            <person name="Haft D.H."/>
            <person name="Dodson R.J."/>
            <person name="Madupu R."/>
            <person name="Nelson W.C."/>
            <person name="Rosovitz M.J."/>
            <person name="Sullivan S.A."/>
            <person name="Khouri H."/>
            <person name="Dimitrov G.I."/>
            <person name="Watkins K.L."/>
            <person name="Mulligan S."/>
            <person name="Benton J."/>
            <person name="Radune D."/>
            <person name="Fisher D.J."/>
            <person name="Atkins H.S."/>
            <person name="Hiscox T."/>
            <person name="Jost B.H."/>
            <person name="Billington S.J."/>
            <person name="Songer J.G."/>
            <person name="McClane B.A."/>
            <person name="Titball R.W."/>
            <person name="Rood J.I."/>
            <person name="Melville S.B."/>
            <person name="Paulsen I.T."/>
        </authorList>
    </citation>
    <scope>NUCLEOTIDE SEQUENCE [LARGE SCALE GENOMIC DNA]</scope>
    <source>
        <strain>SM101 / Type A</strain>
    </source>
</reference>
<gene>
    <name evidence="1" type="primary">hemC</name>
    <name type="ordered locus">CPR_1422</name>
</gene>
<accession>Q0ST16</accession>
<name>HEM3_CLOPS</name>
<dbReference type="EC" id="2.5.1.61" evidence="1"/>
<dbReference type="EMBL" id="CP000312">
    <property type="protein sequence ID" value="ABG85763.1"/>
    <property type="molecule type" value="Genomic_DNA"/>
</dbReference>
<dbReference type="RefSeq" id="WP_011592386.1">
    <property type="nucleotide sequence ID" value="NC_008262.1"/>
</dbReference>
<dbReference type="SMR" id="Q0ST16"/>
<dbReference type="KEGG" id="cpr:CPR_1422"/>
<dbReference type="UniPathway" id="UPA00251">
    <property type="reaction ID" value="UER00319"/>
</dbReference>
<dbReference type="Proteomes" id="UP000001824">
    <property type="component" value="Chromosome"/>
</dbReference>
<dbReference type="GO" id="GO:0005737">
    <property type="term" value="C:cytoplasm"/>
    <property type="evidence" value="ECO:0007669"/>
    <property type="project" value="TreeGrafter"/>
</dbReference>
<dbReference type="GO" id="GO:0004418">
    <property type="term" value="F:hydroxymethylbilane synthase activity"/>
    <property type="evidence" value="ECO:0007669"/>
    <property type="project" value="UniProtKB-UniRule"/>
</dbReference>
<dbReference type="GO" id="GO:0006782">
    <property type="term" value="P:protoporphyrinogen IX biosynthetic process"/>
    <property type="evidence" value="ECO:0007669"/>
    <property type="project" value="UniProtKB-UniRule"/>
</dbReference>
<dbReference type="CDD" id="cd13647">
    <property type="entry name" value="PBP2_PBGD_2"/>
    <property type="match status" value="1"/>
</dbReference>
<dbReference type="FunFam" id="3.40.190.10:FF:000005">
    <property type="entry name" value="Porphobilinogen deaminase"/>
    <property type="match status" value="1"/>
</dbReference>
<dbReference type="Gene3D" id="3.40.190.10">
    <property type="entry name" value="Periplasmic binding protein-like II"/>
    <property type="match status" value="2"/>
</dbReference>
<dbReference type="Gene3D" id="3.30.160.40">
    <property type="entry name" value="Porphobilinogen deaminase, C-terminal domain"/>
    <property type="match status" value="1"/>
</dbReference>
<dbReference type="HAMAP" id="MF_00260">
    <property type="entry name" value="Porphobil_deam"/>
    <property type="match status" value="1"/>
</dbReference>
<dbReference type="InterPro" id="IPR000860">
    <property type="entry name" value="HemC"/>
</dbReference>
<dbReference type="InterPro" id="IPR022419">
    <property type="entry name" value="Porphobilin_deaminase_cofac_BS"/>
</dbReference>
<dbReference type="InterPro" id="IPR022417">
    <property type="entry name" value="Porphobilin_deaminase_N"/>
</dbReference>
<dbReference type="InterPro" id="IPR022418">
    <property type="entry name" value="Porphobilinogen_deaminase_C"/>
</dbReference>
<dbReference type="InterPro" id="IPR036803">
    <property type="entry name" value="Porphobilinogen_deaminase_C_sf"/>
</dbReference>
<dbReference type="NCBIfam" id="TIGR00212">
    <property type="entry name" value="hemC"/>
    <property type="match status" value="1"/>
</dbReference>
<dbReference type="PANTHER" id="PTHR11557">
    <property type="entry name" value="PORPHOBILINOGEN DEAMINASE"/>
    <property type="match status" value="1"/>
</dbReference>
<dbReference type="PANTHER" id="PTHR11557:SF0">
    <property type="entry name" value="PORPHOBILINOGEN DEAMINASE"/>
    <property type="match status" value="1"/>
</dbReference>
<dbReference type="Pfam" id="PF01379">
    <property type="entry name" value="Porphobil_deam"/>
    <property type="match status" value="1"/>
</dbReference>
<dbReference type="Pfam" id="PF03900">
    <property type="entry name" value="Porphobil_deamC"/>
    <property type="match status" value="1"/>
</dbReference>
<dbReference type="PIRSF" id="PIRSF001438">
    <property type="entry name" value="4pyrrol_synth_OHMeBilane_synth"/>
    <property type="match status" value="1"/>
</dbReference>
<dbReference type="PRINTS" id="PR00151">
    <property type="entry name" value="PORPHBDMNASE"/>
</dbReference>
<dbReference type="SUPFAM" id="SSF53850">
    <property type="entry name" value="Periplasmic binding protein-like II"/>
    <property type="match status" value="1"/>
</dbReference>
<dbReference type="SUPFAM" id="SSF54782">
    <property type="entry name" value="Porphobilinogen deaminase (hydroxymethylbilane synthase), C-terminal domain"/>
    <property type="match status" value="1"/>
</dbReference>
<dbReference type="PROSITE" id="PS00533">
    <property type="entry name" value="PORPHOBILINOGEN_DEAM"/>
    <property type="match status" value="1"/>
</dbReference>
<comment type="function">
    <text evidence="1">Tetrapolymerization of the monopyrrole PBG into the hydroxymethylbilane pre-uroporphyrinogen in several discrete steps.</text>
</comment>
<comment type="catalytic activity">
    <reaction evidence="1">
        <text>4 porphobilinogen + H2O = hydroxymethylbilane + 4 NH4(+)</text>
        <dbReference type="Rhea" id="RHEA:13185"/>
        <dbReference type="ChEBI" id="CHEBI:15377"/>
        <dbReference type="ChEBI" id="CHEBI:28938"/>
        <dbReference type="ChEBI" id="CHEBI:57845"/>
        <dbReference type="ChEBI" id="CHEBI:58126"/>
        <dbReference type="EC" id="2.5.1.61"/>
    </reaction>
</comment>
<comment type="cofactor">
    <cofactor evidence="1">
        <name>dipyrromethane</name>
        <dbReference type="ChEBI" id="CHEBI:60342"/>
    </cofactor>
    <text evidence="1">Binds 1 dipyrromethane group covalently.</text>
</comment>
<comment type="pathway">
    <text evidence="1">Porphyrin-containing compound metabolism; protoporphyrin-IX biosynthesis; coproporphyrinogen-III from 5-aminolevulinate: step 2/4.</text>
</comment>
<comment type="subunit">
    <text evidence="1">Monomer.</text>
</comment>
<comment type="miscellaneous">
    <text evidence="1">The porphobilinogen subunits are added to the dipyrromethane group.</text>
</comment>
<comment type="similarity">
    <text evidence="1">Belongs to the HMBS family.</text>
</comment>
<proteinExistence type="inferred from homology"/>